<comment type="function">
    <text evidence="1">Catalyzes the addition and repair of the essential 3'-terminal CCA sequence in tRNAs without using a nucleic acid template. Adds these three nucleotides in the order of C, C, and A to the tRNA nucleotide-73, using CTP and ATP as substrates and producing inorganic pyrophosphate. tRNA 3'-terminal CCA addition is required both for tRNA processing and repair. Also involved in tRNA surveillance by mediating tandem CCA addition to generate a CCACCA at the 3' terminus of unstable tRNAs. While stable tRNAs receive only 3'-terminal CCA, unstable tRNAs are marked with CCACCA and rapidly degraded.</text>
</comment>
<comment type="catalytic activity">
    <reaction evidence="1">
        <text>a tRNA precursor + 2 CTP + ATP = a tRNA with a 3' CCA end + 3 diphosphate</text>
        <dbReference type="Rhea" id="RHEA:14433"/>
        <dbReference type="Rhea" id="RHEA-COMP:10465"/>
        <dbReference type="Rhea" id="RHEA-COMP:10468"/>
        <dbReference type="ChEBI" id="CHEBI:30616"/>
        <dbReference type="ChEBI" id="CHEBI:33019"/>
        <dbReference type="ChEBI" id="CHEBI:37563"/>
        <dbReference type="ChEBI" id="CHEBI:74896"/>
        <dbReference type="ChEBI" id="CHEBI:83071"/>
        <dbReference type="EC" id="2.7.7.72"/>
    </reaction>
</comment>
<comment type="catalytic activity">
    <reaction evidence="1">
        <text>a tRNA with a 3' CCA end + 2 CTP + ATP = a tRNA with a 3' CCACCA end + 3 diphosphate</text>
        <dbReference type="Rhea" id="RHEA:76235"/>
        <dbReference type="Rhea" id="RHEA-COMP:10468"/>
        <dbReference type="Rhea" id="RHEA-COMP:18655"/>
        <dbReference type="ChEBI" id="CHEBI:30616"/>
        <dbReference type="ChEBI" id="CHEBI:33019"/>
        <dbReference type="ChEBI" id="CHEBI:37563"/>
        <dbReference type="ChEBI" id="CHEBI:83071"/>
        <dbReference type="ChEBI" id="CHEBI:195187"/>
    </reaction>
    <physiologicalReaction direction="left-to-right" evidence="1">
        <dbReference type="Rhea" id="RHEA:76236"/>
    </physiologicalReaction>
</comment>
<comment type="cofactor">
    <cofactor evidence="1">
        <name>Mg(2+)</name>
        <dbReference type="ChEBI" id="CHEBI:18420"/>
    </cofactor>
</comment>
<comment type="subunit">
    <text evidence="1">Homodimer.</text>
</comment>
<comment type="miscellaneous">
    <text evidence="1">A single active site specifically recognizes both ATP and CTP and is responsible for their addition.</text>
</comment>
<comment type="similarity">
    <text evidence="1">Belongs to the tRNA nucleotidyltransferase/poly(A) polymerase family. Archaeal CCA-adding enzyme subfamily.</text>
</comment>
<accession>Q9HSP6</accession>
<evidence type="ECO:0000255" key="1">
    <source>
        <dbReference type="HAMAP-Rule" id="MF_01264"/>
    </source>
</evidence>
<feature type="chain" id="PRO_0000139067" description="CCA-adding enzyme">
    <location>
        <begin position="1"/>
        <end position="452"/>
    </location>
</feature>
<feature type="binding site" evidence="1">
    <location>
        <position position="54"/>
    </location>
    <ligand>
        <name>ATP</name>
        <dbReference type="ChEBI" id="CHEBI:30616"/>
    </ligand>
</feature>
<feature type="binding site" evidence="1">
    <location>
        <position position="54"/>
    </location>
    <ligand>
        <name>CTP</name>
        <dbReference type="ChEBI" id="CHEBI:37563"/>
    </ligand>
</feature>
<feature type="binding site" evidence="1">
    <location>
        <position position="57"/>
    </location>
    <ligand>
        <name>ATP</name>
        <dbReference type="ChEBI" id="CHEBI:30616"/>
    </ligand>
</feature>
<feature type="binding site" evidence="1">
    <location>
        <position position="57"/>
    </location>
    <ligand>
        <name>CTP</name>
        <dbReference type="ChEBI" id="CHEBI:37563"/>
    </ligand>
</feature>
<feature type="binding site" evidence="1">
    <location>
        <position position="66"/>
    </location>
    <ligand>
        <name>Mg(2+)</name>
        <dbReference type="ChEBI" id="CHEBI:18420"/>
    </ligand>
</feature>
<feature type="binding site" evidence="1">
    <location>
        <position position="68"/>
    </location>
    <ligand>
        <name>Mg(2+)</name>
        <dbReference type="ChEBI" id="CHEBI:18420"/>
    </ligand>
</feature>
<feature type="binding site" evidence="1">
    <location>
        <position position="117"/>
    </location>
    <ligand>
        <name>Mg(2+)</name>
        <dbReference type="ChEBI" id="CHEBI:18420"/>
    </ligand>
</feature>
<feature type="binding site" evidence="1">
    <location>
        <position position="140"/>
    </location>
    <ligand>
        <name>ATP</name>
        <dbReference type="ChEBI" id="CHEBI:30616"/>
    </ligand>
</feature>
<feature type="binding site" evidence="1">
    <location>
        <position position="140"/>
    </location>
    <ligand>
        <name>CTP</name>
        <dbReference type="ChEBI" id="CHEBI:37563"/>
    </ligand>
</feature>
<feature type="binding site" evidence="1">
    <location>
        <position position="160"/>
    </location>
    <ligand>
        <name>ATP</name>
        <dbReference type="ChEBI" id="CHEBI:30616"/>
    </ligand>
</feature>
<feature type="binding site" evidence="1">
    <location>
        <position position="160"/>
    </location>
    <ligand>
        <name>CTP</name>
        <dbReference type="ChEBI" id="CHEBI:37563"/>
    </ligand>
</feature>
<feature type="binding site" evidence="1">
    <location>
        <position position="169"/>
    </location>
    <ligand>
        <name>ATP</name>
        <dbReference type="ChEBI" id="CHEBI:30616"/>
    </ligand>
</feature>
<feature type="binding site" evidence="1">
    <location>
        <position position="169"/>
    </location>
    <ligand>
        <name>CTP</name>
        <dbReference type="ChEBI" id="CHEBI:37563"/>
    </ligand>
</feature>
<reference key="1">
    <citation type="journal article" date="2000" name="Proc. Natl. Acad. Sci. U.S.A.">
        <title>Genome sequence of Halobacterium species NRC-1.</title>
        <authorList>
            <person name="Ng W.V."/>
            <person name="Kennedy S.P."/>
            <person name="Mahairas G.G."/>
            <person name="Berquist B."/>
            <person name="Pan M."/>
            <person name="Shukla H.D."/>
            <person name="Lasky S.R."/>
            <person name="Baliga N.S."/>
            <person name="Thorsson V."/>
            <person name="Sbrogna J."/>
            <person name="Swartzell S."/>
            <person name="Weir D."/>
            <person name="Hall J."/>
            <person name="Dahl T.A."/>
            <person name="Welti R."/>
            <person name="Goo Y.A."/>
            <person name="Leithauser B."/>
            <person name="Keller K."/>
            <person name="Cruz R."/>
            <person name="Danson M.J."/>
            <person name="Hough D.W."/>
            <person name="Maddocks D.G."/>
            <person name="Jablonski P.E."/>
            <person name="Krebs M.P."/>
            <person name="Angevine C.M."/>
            <person name="Dale H."/>
            <person name="Isenbarger T.A."/>
            <person name="Peck R.F."/>
            <person name="Pohlschroder M."/>
            <person name="Spudich J.L."/>
            <person name="Jung K.-H."/>
            <person name="Alam M."/>
            <person name="Freitas T."/>
            <person name="Hou S."/>
            <person name="Daniels C.J."/>
            <person name="Dennis P.P."/>
            <person name="Omer A.D."/>
            <person name="Ebhardt H."/>
            <person name="Lowe T.M."/>
            <person name="Liang P."/>
            <person name="Riley M."/>
            <person name="Hood L."/>
            <person name="DasSarma S."/>
        </authorList>
    </citation>
    <scope>NUCLEOTIDE SEQUENCE [LARGE SCALE GENOMIC DNA]</scope>
    <source>
        <strain>ATCC 700922 / JCM 11081 / NRC-1</strain>
    </source>
</reference>
<organism>
    <name type="scientific">Halobacterium salinarum (strain ATCC 700922 / JCM 11081 / NRC-1)</name>
    <name type="common">Halobacterium halobium</name>
    <dbReference type="NCBI Taxonomy" id="64091"/>
    <lineage>
        <taxon>Archaea</taxon>
        <taxon>Methanobacteriati</taxon>
        <taxon>Methanobacteriota</taxon>
        <taxon>Stenosarchaea group</taxon>
        <taxon>Halobacteria</taxon>
        <taxon>Halobacteriales</taxon>
        <taxon>Halobacteriaceae</taxon>
        <taxon>Halobacterium</taxon>
        <taxon>Halobacterium salinarum NRC-34001</taxon>
    </lineage>
</organism>
<name>CCA_HALSA</name>
<dbReference type="EC" id="2.7.7.72" evidence="1"/>
<dbReference type="EMBL" id="AE004437">
    <property type="protein sequence ID" value="AAG18757.1"/>
    <property type="molecule type" value="Genomic_DNA"/>
</dbReference>
<dbReference type="PIR" id="A84174">
    <property type="entry name" value="A84174"/>
</dbReference>
<dbReference type="RefSeq" id="WP_010902052.1">
    <property type="nucleotide sequence ID" value="NC_002607.1"/>
</dbReference>
<dbReference type="SMR" id="Q9HSP6"/>
<dbReference type="FunCoup" id="Q9HSP6">
    <property type="interactions" value="5"/>
</dbReference>
<dbReference type="STRING" id="64091.VNG_0137G"/>
<dbReference type="PaxDb" id="64091-VNG_0137G"/>
<dbReference type="GeneID" id="68693113"/>
<dbReference type="KEGG" id="hal:VNG_0137G"/>
<dbReference type="PATRIC" id="fig|64091.14.peg.94"/>
<dbReference type="HOGENOM" id="CLU_044679_0_0_2"/>
<dbReference type="InParanoid" id="Q9HSP6"/>
<dbReference type="OrthoDB" id="7378at2157"/>
<dbReference type="PhylomeDB" id="Q9HSP6"/>
<dbReference type="Proteomes" id="UP000000554">
    <property type="component" value="Chromosome"/>
</dbReference>
<dbReference type="GO" id="GO:0005524">
    <property type="term" value="F:ATP binding"/>
    <property type="evidence" value="ECO:0007669"/>
    <property type="project" value="UniProtKB-UniRule"/>
</dbReference>
<dbReference type="GO" id="GO:0004810">
    <property type="term" value="F:CCA tRNA nucleotidyltransferase activity"/>
    <property type="evidence" value="ECO:0007669"/>
    <property type="project" value="UniProtKB-UniRule"/>
</dbReference>
<dbReference type="GO" id="GO:0000287">
    <property type="term" value="F:magnesium ion binding"/>
    <property type="evidence" value="ECO:0007669"/>
    <property type="project" value="UniProtKB-UniRule"/>
</dbReference>
<dbReference type="GO" id="GO:0000049">
    <property type="term" value="F:tRNA binding"/>
    <property type="evidence" value="ECO:0007669"/>
    <property type="project" value="UniProtKB-UniRule"/>
</dbReference>
<dbReference type="GO" id="GO:0042245">
    <property type="term" value="P:RNA repair"/>
    <property type="evidence" value="ECO:0007669"/>
    <property type="project" value="UniProtKB-KW"/>
</dbReference>
<dbReference type="GO" id="GO:0001680">
    <property type="term" value="P:tRNA 3'-terminal CCA addition"/>
    <property type="evidence" value="ECO:0007669"/>
    <property type="project" value="UniProtKB-UniRule"/>
</dbReference>
<dbReference type="CDD" id="cd05400">
    <property type="entry name" value="NT_2-5OAS_ClassI-CCAase"/>
    <property type="match status" value="1"/>
</dbReference>
<dbReference type="Gene3D" id="3.30.70.1550">
    <property type="entry name" value="Archaeal tRNA CCA-adding enzyme catalytic domain"/>
    <property type="match status" value="1"/>
</dbReference>
<dbReference type="Gene3D" id="3.30.460.10">
    <property type="entry name" value="Beta Polymerase, domain 2"/>
    <property type="match status" value="1"/>
</dbReference>
<dbReference type="Gene3D" id="1.10.1410.30">
    <property type="entry name" value="CCA tRNA nucleotidyltransferase, domain 2"/>
    <property type="match status" value="1"/>
</dbReference>
<dbReference type="Gene3D" id="3.30.70.590">
    <property type="entry name" value="Poly(A) polymerase predicted RNA binding domain"/>
    <property type="match status" value="1"/>
</dbReference>
<dbReference type="HAMAP" id="MF_01264">
    <property type="entry name" value="CCA_arch"/>
    <property type="match status" value="1"/>
</dbReference>
<dbReference type="InterPro" id="IPR048833">
    <property type="entry name" value="CAA_C"/>
</dbReference>
<dbReference type="InterPro" id="IPR008229">
    <property type="entry name" value="CCA-adding_arc"/>
</dbReference>
<dbReference type="InterPro" id="IPR042090">
    <property type="entry name" value="CCA_tRNA_nucleotrans_2"/>
</dbReference>
<dbReference type="InterPro" id="IPR006116">
    <property type="entry name" value="NT_2-5OAS_ClassI-CCAase"/>
</dbReference>
<dbReference type="InterPro" id="IPR043519">
    <property type="entry name" value="NT_sf"/>
</dbReference>
<dbReference type="InterPro" id="IPR011068">
    <property type="entry name" value="NuclTrfase_I-like_C"/>
</dbReference>
<dbReference type="InterPro" id="IPR002934">
    <property type="entry name" value="Polymerase_NTP_transf_dom"/>
</dbReference>
<dbReference type="InterPro" id="IPR015329">
    <property type="entry name" value="tRNA_NucTransf2"/>
</dbReference>
<dbReference type="NCBIfam" id="TIGR03671">
    <property type="entry name" value="cca_archaeal"/>
    <property type="match status" value="1"/>
</dbReference>
<dbReference type="PANTHER" id="PTHR39643">
    <property type="entry name" value="CCA-ADDING ENZYME"/>
    <property type="match status" value="1"/>
</dbReference>
<dbReference type="PANTHER" id="PTHR39643:SF1">
    <property type="entry name" value="CCA-ADDING ENZYME"/>
    <property type="match status" value="1"/>
</dbReference>
<dbReference type="Pfam" id="PF21133">
    <property type="entry name" value="CAA_C"/>
    <property type="match status" value="1"/>
</dbReference>
<dbReference type="Pfam" id="PF01909">
    <property type="entry name" value="NTP_transf_2"/>
    <property type="match status" value="1"/>
</dbReference>
<dbReference type="Pfam" id="PF09249">
    <property type="entry name" value="tRNA_NucTransf2"/>
    <property type="match status" value="1"/>
</dbReference>
<dbReference type="PIRSF" id="PIRSF005335">
    <property type="entry name" value="CCA_arch"/>
    <property type="match status" value="1"/>
</dbReference>
<dbReference type="SUPFAM" id="SSF81301">
    <property type="entry name" value="Nucleotidyltransferase"/>
    <property type="match status" value="1"/>
</dbReference>
<dbReference type="SUPFAM" id="SSF55003">
    <property type="entry name" value="PAP/Archaeal CCA-adding enzyme, C-terminal domain"/>
    <property type="match status" value="1"/>
</dbReference>
<dbReference type="SUPFAM" id="SSF81631">
    <property type="entry name" value="PAP/OAS1 substrate-binding domain"/>
    <property type="match status" value="1"/>
</dbReference>
<gene>
    <name evidence="1" type="primary">cca</name>
    <name type="ordered locus">VNG_0137G</name>
</gene>
<protein>
    <recommendedName>
        <fullName evidence="1">CCA-adding enzyme</fullName>
        <ecNumber evidence="1">2.7.7.72</ecNumber>
    </recommendedName>
    <alternativeName>
        <fullName evidence="1">CCA tRNA nucleotidyltransferase</fullName>
    </alternativeName>
    <alternativeName>
        <fullName evidence="1">tRNA CCA-pyrophosphorylase</fullName>
    </alternativeName>
    <alternativeName>
        <fullName evidence="1">tRNA adenylyl-/cytidylyl- transferase</fullName>
    </alternativeName>
    <alternativeName>
        <fullName evidence="1">tRNA nucleotidyltransferase</fullName>
    </alternativeName>
    <alternativeName>
        <fullName evidence="1">tRNA-NT</fullName>
    </alternativeName>
</protein>
<proteinExistence type="inferred from homology"/>
<sequence>MTDAAAVIERVRQRVDPTPAERRALAAAASRLTERAEAAIAELPVAADVVQVGSTARGTWVAGDRDIDLFVRFPSDLPREQLETYGTTVGAAVLPDGHEEYAEHPYVTGTFEGYAVDLVPCYDVAAATEIKSAVDRTPFHTTYLQEHLDDGLAADVRLCKQFLKGIGVYGSDLRTQGFSGYLCELLVVEYGGFEAMLAAIEDWQPPVVIDPAAHQQASFDDPLVVVDPTDPERNVAAVVSAANVATVQHHARRFRATPSEDAFTPASPAPLDAAALRSHIDRRDTTPLAVVLDAPDVVADQLYPQLYRSRDGVVRGLREHGFDVVRAAAWADERAVVFVELASAELPAVERHVGPPVSVGTHAERFYETYADDDGVYGPFVDDDGRYVVERDRDVRTAGGFARTELGTVALGARIESRVASGDYDVYVGDAVVEALLPEFESELAAYVDPKA</sequence>
<keyword id="KW-0067">ATP-binding</keyword>
<keyword id="KW-0460">Magnesium</keyword>
<keyword id="KW-0479">Metal-binding</keyword>
<keyword id="KW-0547">Nucleotide-binding</keyword>
<keyword id="KW-0548">Nucleotidyltransferase</keyword>
<keyword id="KW-1185">Reference proteome</keyword>
<keyword id="KW-0692">RNA repair</keyword>
<keyword id="KW-0694">RNA-binding</keyword>
<keyword id="KW-0808">Transferase</keyword>
<keyword id="KW-0819">tRNA processing</keyword>